<protein>
    <recommendedName>
        <fullName>Cytochrome c oxidase subunit 7C, mitochondrial</fullName>
    </recommendedName>
    <alternativeName>
        <fullName>Cytochrome c oxidase polypeptide VIIIA</fullName>
    </alternativeName>
    <alternativeName>
        <fullName>Cytochrome c oxidase polypeptide VIIc</fullName>
    </alternativeName>
</protein>
<evidence type="ECO:0000250" key="1">
    <source>
        <dbReference type="UniProtKB" id="P00430"/>
    </source>
</evidence>
<evidence type="ECO:0000250" key="2">
    <source>
        <dbReference type="UniProtKB" id="P04039"/>
    </source>
</evidence>
<evidence type="ECO:0000250" key="3">
    <source>
        <dbReference type="UniProtKB" id="P15954"/>
    </source>
</evidence>
<evidence type="ECO:0000250" key="4">
    <source>
        <dbReference type="UniProtKB" id="P17665"/>
    </source>
</evidence>
<evidence type="ECO:0000269" key="5">
    <source>
    </source>
</evidence>
<evidence type="ECO:0000305" key="6"/>
<feature type="transit peptide" description="Mitochondrion" evidence="5">
    <location>
        <begin position="1"/>
        <end position="16"/>
    </location>
</feature>
<feature type="chain" id="PRO_0000197044" description="Cytochrome c oxidase subunit 7C, mitochondrial">
    <location>
        <begin position="17"/>
        <end position="63"/>
    </location>
</feature>
<feature type="topological domain" description="Mitochondrial matrix" evidence="1">
    <location>
        <begin position="17"/>
        <end position="33"/>
    </location>
</feature>
<feature type="transmembrane region" description="Helical" evidence="1">
    <location>
        <begin position="34"/>
        <end position="60"/>
    </location>
</feature>
<feature type="topological domain" description="Mitochondrial intermembrane" evidence="1">
    <location>
        <begin position="61"/>
        <end position="63"/>
    </location>
</feature>
<feature type="modified residue" description="N6-acetyllysine; alternate" evidence="4">
    <location>
        <position position="25"/>
    </location>
</feature>
<feature type="modified residue" description="N6-succinyllysine; alternate" evidence="4">
    <location>
        <position position="25"/>
    </location>
</feature>
<proteinExistence type="evidence at protein level"/>
<sequence>MLGQSIRRFTTSVVRRSHYEEGPGKNLPFSVENKWRLLLMMTVYFGSGFAAPFFIVRHQLLKK</sequence>
<accession>P80432</accession>
<accession>B2RYT3</accession>
<comment type="function">
    <text evidence="2">Component of the cytochrome c oxidase, the last enzyme in the mitochondrial electron transport chain which drives oxidative phosphorylation. The respiratory chain contains 3 multisubunit complexes succinate dehydrogenase (complex II, CII), ubiquinol-cytochrome c oxidoreductase (cytochrome b-c1 complex, complex III, CIII) and cytochrome c oxidase (complex IV, CIV), that cooperate to transfer electrons derived from NADH and succinate to molecular oxygen, creating an electrochemical gradient over the inner membrane that drives transmembrane transport and the ATP synthase. Cytochrome c oxidase is the component of the respiratory chain that catalyzes the reduction of oxygen to water. Electrons originating from reduced cytochrome c in the intermembrane space (IMS) are transferred via the dinuclear copper A center (CU(A)) of subunit 2 and heme A of subunit 1 to the active site in subunit 1, a binuclear center (BNC) formed by heme A3 and copper B (CU(B)). The BNC reduces molecular oxygen to 2 water molecules using 4 electrons from cytochrome c in the IMS and 4 protons from the mitochondrial matrix.</text>
</comment>
<comment type="pathway">
    <text evidence="2">Energy metabolism; oxidative phosphorylation.</text>
</comment>
<comment type="subunit">
    <text evidence="1 3">Component of the cytochrome c oxidase (complex IV, CIV), a multisubunit enzyme composed of 14 subunits. The complex is composed of a catalytic core of 3 subunits MT-CO1, MT-CO2 and MT-CO3, encoded in the mitochondrial DNA, and 11 supernumerary subunits COX4I, COX5A, COX5B, COX6A, COX6B, COX6C, COX7A, COX7B, COX7C, COX8 and NDUFA4, which are encoded in the nuclear genome. The complex exists as a monomer or a dimer and forms supercomplexes (SCs) in the inner mitochondrial membrane with NADH-ubiquinone oxidoreductase (complex I, CI) and ubiquinol-cytochrome c oxidoreductase (cytochrome b-c1 complex, complex III, CIII), resulting in different assemblies (supercomplex SCI(1)III(2)IV(1) and megacomplex MCI(2)III(2)IV(2)) (By similarity). Interacts with RAB5IF (By similarity).</text>
</comment>
<comment type="subcellular location">
    <subcellularLocation>
        <location evidence="1">Mitochondrion inner membrane</location>
        <topology evidence="1">Single-pass membrane protein</topology>
    </subcellularLocation>
</comment>
<comment type="similarity">
    <text evidence="6">Belongs to the cytochrome c oxidase VIIc family.</text>
</comment>
<reference key="1">
    <citation type="submission" date="2005-07" db="EMBL/GenBank/DDBJ databases">
        <authorList>
            <person name="Mural R.J."/>
            <person name="Adams M.D."/>
            <person name="Myers E.W."/>
            <person name="Smith H.O."/>
            <person name="Venter J.C."/>
        </authorList>
    </citation>
    <scope>NUCLEOTIDE SEQUENCE [LARGE SCALE GENOMIC DNA]</scope>
</reference>
<reference key="2">
    <citation type="journal article" date="2004" name="Genome Res.">
        <title>The status, quality, and expansion of the NIH full-length cDNA project: the Mammalian Gene Collection (MGC).</title>
        <authorList>
            <consortium name="The MGC Project Team"/>
        </authorList>
    </citation>
    <scope>NUCLEOTIDE SEQUENCE [LARGE SCALE MRNA]</scope>
    <source>
        <tissue>Pituitary anterior lobe</tissue>
    </source>
</reference>
<reference key="3">
    <citation type="journal article" date="1995" name="Eur. J. Biochem.">
        <title>Cytochrome-c oxidase in developing rat heart. Enzymic properties and amino-terminal sequences suggest identity of the fetal heart and the adult liver isoform.</title>
        <authorList>
            <person name="Schaegger H."/>
            <person name="Noack H."/>
            <person name="Halangk W."/>
            <person name="Brandt U."/>
            <person name="von Jagow G."/>
        </authorList>
    </citation>
    <scope>PROTEIN SEQUENCE OF 17-26</scope>
    <source>
        <strain>Wistar</strain>
        <tissue>Heart</tissue>
        <tissue>Liver</tissue>
    </source>
</reference>
<organism>
    <name type="scientific">Rattus norvegicus</name>
    <name type="common">Rat</name>
    <dbReference type="NCBI Taxonomy" id="10116"/>
    <lineage>
        <taxon>Eukaryota</taxon>
        <taxon>Metazoa</taxon>
        <taxon>Chordata</taxon>
        <taxon>Craniata</taxon>
        <taxon>Vertebrata</taxon>
        <taxon>Euteleostomi</taxon>
        <taxon>Mammalia</taxon>
        <taxon>Eutheria</taxon>
        <taxon>Euarchontoglires</taxon>
        <taxon>Glires</taxon>
        <taxon>Rodentia</taxon>
        <taxon>Myomorpha</taxon>
        <taxon>Muroidea</taxon>
        <taxon>Muridae</taxon>
        <taxon>Murinae</taxon>
        <taxon>Rattus</taxon>
    </lineage>
</organism>
<name>COX7C_RAT</name>
<keyword id="KW-0007">Acetylation</keyword>
<keyword id="KW-0903">Direct protein sequencing</keyword>
<keyword id="KW-0472">Membrane</keyword>
<keyword id="KW-0496">Mitochondrion</keyword>
<keyword id="KW-0999">Mitochondrion inner membrane</keyword>
<keyword id="KW-1185">Reference proteome</keyword>
<keyword id="KW-0809">Transit peptide</keyword>
<keyword id="KW-0812">Transmembrane</keyword>
<keyword id="KW-1133">Transmembrane helix</keyword>
<gene>
    <name type="primary">Cox7c</name>
    <name type="synonym">Cox7c1</name>
</gene>
<dbReference type="EMBL" id="CH473955">
    <property type="protein sequence ID" value="EDM09981.1"/>
    <property type="molecule type" value="Genomic_DNA"/>
</dbReference>
<dbReference type="EMBL" id="BC166894">
    <property type="protein sequence ID" value="AAI66894.1"/>
    <property type="molecule type" value="mRNA"/>
</dbReference>
<dbReference type="PIR" id="S65388">
    <property type="entry name" value="S65388"/>
</dbReference>
<dbReference type="RefSeq" id="NP_001128177.1">
    <property type="nucleotide sequence ID" value="NM_001134705.1"/>
</dbReference>
<dbReference type="SMR" id="P80432"/>
<dbReference type="CORUM" id="P80432"/>
<dbReference type="FunCoup" id="P80432">
    <property type="interactions" value="1693"/>
</dbReference>
<dbReference type="STRING" id="10116.ENSRNOP00000049222"/>
<dbReference type="CarbonylDB" id="P80432"/>
<dbReference type="iPTMnet" id="P80432"/>
<dbReference type="PhosphoSitePlus" id="P80432"/>
<dbReference type="jPOST" id="P80432"/>
<dbReference type="PaxDb" id="10116-ENSRNOP00000049222"/>
<dbReference type="Ensembl" id="ENSRNOT00000051895.3">
    <property type="protein sequence ID" value="ENSRNOP00000049222.2"/>
    <property type="gene ID" value="ENSRNOG00000030237.3"/>
</dbReference>
<dbReference type="GeneID" id="100188937"/>
<dbReference type="KEGG" id="rno:100188937"/>
<dbReference type="UCSC" id="RGD:2300145">
    <property type="organism name" value="rat"/>
</dbReference>
<dbReference type="AGR" id="RGD:2300145"/>
<dbReference type="CTD" id="1350"/>
<dbReference type="RGD" id="2300145">
    <property type="gene designation" value="Cox7c"/>
</dbReference>
<dbReference type="eggNOG" id="KOG4527">
    <property type="taxonomic scope" value="Eukaryota"/>
</dbReference>
<dbReference type="GeneTree" id="ENSGT00390000018086"/>
<dbReference type="HOGENOM" id="CLU_194769_0_0_1"/>
<dbReference type="InParanoid" id="P80432"/>
<dbReference type="OMA" id="SIENKWR"/>
<dbReference type="OrthoDB" id="9974841at2759"/>
<dbReference type="PhylomeDB" id="P80432"/>
<dbReference type="TreeFam" id="TF105069"/>
<dbReference type="Reactome" id="R-RNO-5628897">
    <property type="pathway name" value="TP53 Regulates Metabolic Genes"/>
</dbReference>
<dbReference type="Reactome" id="R-RNO-611105">
    <property type="pathway name" value="Respiratory electron transport"/>
</dbReference>
<dbReference type="Reactome" id="R-RNO-9707564">
    <property type="pathway name" value="Cytoprotection by HMOX1"/>
</dbReference>
<dbReference type="Reactome" id="R-RNO-9864848">
    <property type="pathway name" value="Complex IV assembly"/>
</dbReference>
<dbReference type="UniPathway" id="UPA00705"/>
<dbReference type="PRO" id="PR:P80432"/>
<dbReference type="Proteomes" id="UP000002494">
    <property type="component" value="Chromosome 2"/>
</dbReference>
<dbReference type="Proteomes" id="UP000234681">
    <property type="component" value="Chromosome 2"/>
</dbReference>
<dbReference type="Bgee" id="ENSRNOG00000030237">
    <property type="expression patterns" value="Expressed in quadriceps femoris and 20 other cell types or tissues"/>
</dbReference>
<dbReference type="GO" id="GO:0005743">
    <property type="term" value="C:mitochondrial inner membrane"/>
    <property type="evidence" value="ECO:0000266"/>
    <property type="project" value="RGD"/>
</dbReference>
<dbReference type="GO" id="GO:0031966">
    <property type="term" value="C:mitochondrial membrane"/>
    <property type="evidence" value="ECO:0000266"/>
    <property type="project" value="RGD"/>
</dbReference>
<dbReference type="GO" id="GO:0045277">
    <property type="term" value="C:respiratory chain complex IV"/>
    <property type="evidence" value="ECO:0000266"/>
    <property type="project" value="RGD"/>
</dbReference>
<dbReference type="GO" id="GO:0006123">
    <property type="term" value="P:mitochondrial electron transport, cytochrome c to oxygen"/>
    <property type="evidence" value="ECO:0000318"/>
    <property type="project" value="GO_Central"/>
</dbReference>
<dbReference type="CDD" id="cd00929">
    <property type="entry name" value="Cyt_c_Oxidase_VIIc"/>
    <property type="match status" value="1"/>
</dbReference>
<dbReference type="FunFam" id="4.10.49.10:FF:000001">
    <property type="entry name" value="Cytochrome c oxidase subunit 7C"/>
    <property type="match status" value="1"/>
</dbReference>
<dbReference type="Gene3D" id="4.10.49.10">
    <property type="entry name" value="Cytochrome c oxidase subunit VIIc"/>
    <property type="match status" value="1"/>
</dbReference>
<dbReference type="InterPro" id="IPR004202">
    <property type="entry name" value="COX7C/Cox8"/>
</dbReference>
<dbReference type="InterPro" id="IPR036636">
    <property type="entry name" value="COX7C/Cox8_sf"/>
</dbReference>
<dbReference type="PANTHER" id="PTHR13313:SF0">
    <property type="entry name" value="CYTOCHROME C OXIDASE SUBUNIT 7C, MITOCHONDRIAL"/>
    <property type="match status" value="1"/>
</dbReference>
<dbReference type="PANTHER" id="PTHR13313">
    <property type="entry name" value="CYTOCHROME C OXIDASE SUBUNIT VIIC"/>
    <property type="match status" value="1"/>
</dbReference>
<dbReference type="Pfam" id="PF02935">
    <property type="entry name" value="COX7C"/>
    <property type="match status" value="1"/>
</dbReference>
<dbReference type="SUPFAM" id="SSF81427">
    <property type="entry name" value="Mitochondrial cytochrome c oxidase subunit VIIc (aka VIIIa)"/>
    <property type="match status" value="1"/>
</dbReference>